<evidence type="ECO:0000250" key="1"/>
<evidence type="ECO:0000255" key="2"/>
<evidence type="ECO:0000305" key="3"/>
<proteinExistence type="evidence at transcript level"/>
<accession>Q5Y4U4</accession>
<feature type="signal peptide" evidence="2">
    <location>
        <begin position="1"/>
        <end position="19"/>
    </location>
</feature>
<feature type="propeptide" id="PRO_5000093683" evidence="2">
    <location>
        <begin position="20"/>
        <end position="45"/>
    </location>
</feature>
<feature type="chain" id="PRO_5000093684" description="U8-agatoxin-Ao1a">
    <location>
        <begin position="46"/>
        <end position="99"/>
    </location>
</feature>
<protein>
    <recommendedName>
        <fullName>U8-agatoxin-Ao1a</fullName>
        <shortName>U8-AGTX-Ao1a</shortName>
    </recommendedName>
    <alternativeName>
        <fullName>AgorTX_B6</fullName>
    </alternativeName>
</protein>
<keyword id="KW-1015">Disulfide bond</keyword>
<keyword id="KW-0964">Secreted</keyword>
<keyword id="KW-0732">Signal</keyword>
<keyword id="KW-0800">Toxin</keyword>
<reference key="1">
    <citation type="journal article" date="2005" name="Proteins">
        <title>A novel strategy for the identification of toxinlike structures in spider venom.</title>
        <authorList>
            <person name="Kozlov S.A."/>
            <person name="Malyavka A."/>
            <person name="McCutchen B."/>
            <person name="Lu A."/>
            <person name="Schepers E."/>
            <person name="Herrmann R."/>
            <person name="Grishin E.V."/>
        </authorList>
    </citation>
    <scope>NUCLEOTIDE SEQUENCE [MRNA]</scope>
    <source>
        <tissue>Venom gland</tissue>
    </source>
</reference>
<comment type="subcellular location">
    <subcellularLocation>
        <location evidence="1">Secreted</location>
    </subcellularLocation>
</comment>
<comment type="tissue specificity">
    <text>Expressed by the venom gland.</text>
</comment>
<comment type="PTM">
    <text evidence="3">Contains 5 disulfide bonds.</text>
</comment>
<comment type="similarity">
    <text>Belongs to the neurotoxin 02 (plectoxin) family.</text>
</comment>
<name>TX20A_AGEOR</name>
<dbReference type="EMBL" id="AY681341">
    <property type="protein sequence ID" value="AAU93682.1"/>
    <property type="molecule type" value="mRNA"/>
</dbReference>
<dbReference type="ArachnoServer" id="AS000072">
    <property type="toxin name" value="U8-agatoxin-Ao1a"/>
</dbReference>
<dbReference type="GO" id="GO:0005576">
    <property type="term" value="C:extracellular region"/>
    <property type="evidence" value="ECO:0007669"/>
    <property type="project" value="UniProtKB-SubCell"/>
</dbReference>
<dbReference type="GO" id="GO:0008200">
    <property type="term" value="F:ion channel inhibitor activity"/>
    <property type="evidence" value="ECO:0007669"/>
    <property type="project" value="InterPro"/>
</dbReference>
<dbReference type="GO" id="GO:0090729">
    <property type="term" value="F:toxin activity"/>
    <property type="evidence" value="ECO:0007669"/>
    <property type="project" value="UniProtKB-KW"/>
</dbReference>
<dbReference type="CDD" id="cd12960">
    <property type="entry name" value="Spider_toxin"/>
    <property type="match status" value="1"/>
</dbReference>
<dbReference type="InterPro" id="IPR004169">
    <property type="entry name" value="Spidertoxin"/>
</dbReference>
<sequence>MKSLLFVTIAVYFVAQAVTANLLSNFLGSSLIDDDKGNMHKLYKRSEDQCIGRSCTCDTSSTSCCPYAACRCNLWKTSCKCQRTGRKWATPCKEIYSPN</sequence>
<organism>
    <name type="scientific">Agelena orientalis</name>
    <name type="common">Funnel-web spider</name>
    <dbReference type="NCBI Taxonomy" id="293813"/>
    <lineage>
        <taxon>Eukaryota</taxon>
        <taxon>Metazoa</taxon>
        <taxon>Ecdysozoa</taxon>
        <taxon>Arthropoda</taxon>
        <taxon>Chelicerata</taxon>
        <taxon>Arachnida</taxon>
        <taxon>Araneae</taxon>
        <taxon>Araneomorphae</taxon>
        <taxon>Entelegynae</taxon>
        <taxon>Agelenidae</taxon>
        <taxon>Agelena</taxon>
    </lineage>
</organism>